<name>PEX1_SCHPO</name>
<feature type="chain" id="PRO_0000374017" description="Peroxisomal ATPase pex1">
    <location>
        <begin position="1"/>
        <end position="937"/>
    </location>
</feature>
<feature type="binding site" evidence="2">
    <location>
        <begin position="379"/>
        <end position="386"/>
    </location>
    <ligand>
        <name>ATP</name>
        <dbReference type="ChEBI" id="CHEBI:30616"/>
    </ligand>
</feature>
<feature type="binding site" evidence="2">
    <location>
        <begin position="647"/>
        <end position="654"/>
    </location>
    <ligand>
        <name>ATP</name>
        <dbReference type="ChEBI" id="CHEBI:30616"/>
    </ligand>
</feature>
<proteinExistence type="inferred from homology"/>
<gene>
    <name type="primary">pex1</name>
    <name type="ORF">SPCC553.03</name>
</gene>
<evidence type="ECO:0000250" key="1">
    <source>
        <dbReference type="UniProtKB" id="P24004"/>
    </source>
</evidence>
<evidence type="ECO:0000255" key="2"/>
<evidence type="ECO:0000269" key="3">
    <source>
    </source>
</evidence>
<evidence type="ECO:0000305" key="4"/>
<accession>O74941</accession>
<reference key="1">
    <citation type="journal article" date="2002" name="Nature">
        <title>The genome sequence of Schizosaccharomyces pombe.</title>
        <authorList>
            <person name="Wood V."/>
            <person name="Gwilliam R."/>
            <person name="Rajandream M.A."/>
            <person name="Lyne M.H."/>
            <person name="Lyne R."/>
            <person name="Stewart A."/>
            <person name="Sgouros J.G."/>
            <person name="Peat N."/>
            <person name="Hayles J."/>
            <person name="Baker S.G."/>
            <person name="Basham D."/>
            <person name="Bowman S."/>
            <person name="Brooks K."/>
            <person name="Brown D."/>
            <person name="Brown S."/>
            <person name="Chillingworth T."/>
            <person name="Churcher C.M."/>
            <person name="Collins M."/>
            <person name="Connor R."/>
            <person name="Cronin A."/>
            <person name="Davis P."/>
            <person name="Feltwell T."/>
            <person name="Fraser A."/>
            <person name="Gentles S."/>
            <person name="Goble A."/>
            <person name="Hamlin N."/>
            <person name="Harris D.E."/>
            <person name="Hidalgo J."/>
            <person name="Hodgson G."/>
            <person name="Holroyd S."/>
            <person name="Hornsby T."/>
            <person name="Howarth S."/>
            <person name="Huckle E.J."/>
            <person name="Hunt S."/>
            <person name="Jagels K."/>
            <person name="James K.D."/>
            <person name="Jones L."/>
            <person name="Jones M."/>
            <person name="Leather S."/>
            <person name="McDonald S."/>
            <person name="McLean J."/>
            <person name="Mooney P."/>
            <person name="Moule S."/>
            <person name="Mungall K.L."/>
            <person name="Murphy L.D."/>
            <person name="Niblett D."/>
            <person name="Odell C."/>
            <person name="Oliver K."/>
            <person name="O'Neil S."/>
            <person name="Pearson D."/>
            <person name="Quail M.A."/>
            <person name="Rabbinowitsch E."/>
            <person name="Rutherford K.M."/>
            <person name="Rutter S."/>
            <person name="Saunders D."/>
            <person name="Seeger K."/>
            <person name="Sharp S."/>
            <person name="Skelton J."/>
            <person name="Simmonds M.N."/>
            <person name="Squares R."/>
            <person name="Squares S."/>
            <person name="Stevens K."/>
            <person name="Taylor K."/>
            <person name="Taylor R.G."/>
            <person name="Tivey A."/>
            <person name="Walsh S.V."/>
            <person name="Warren T."/>
            <person name="Whitehead S."/>
            <person name="Woodward J.R."/>
            <person name="Volckaert G."/>
            <person name="Aert R."/>
            <person name="Robben J."/>
            <person name="Grymonprez B."/>
            <person name="Weltjens I."/>
            <person name="Vanstreels E."/>
            <person name="Rieger M."/>
            <person name="Schaefer M."/>
            <person name="Mueller-Auer S."/>
            <person name="Gabel C."/>
            <person name="Fuchs M."/>
            <person name="Duesterhoeft A."/>
            <person name="Fritzc C."/>
            <person name="Holzer E."/>
            <person name="Moestl D."/>
            <person name="Hilbert H."/>
            <person name="Borzym K."/>
            <person name="Langer I."/>
            <person name="Beck A."/>
            <person name="Lehrach H."/>
            <person name="Reinhardt R."/>
            <person name="Pohl T.M."/>
            <person name="Eger P."/>
            <person name="Zimmermann W."/>
            <person name="Wedler H."/>
            <person name="Wambutt R."/>
            <person name="Purnelle B."/>
            <person name="Goffeau A."/>
            <person name="Cadieu E."/>
            <person name="Dreano S."/>
            <person name="Gloux S."/>
            <person name="Lelaure V."/>
            <person name="Mottier S."/>
            <person name="Galibert F."/>
            <person name="Aves S.J."/>
            <person name="Xiang Z."/>
            <person name="Hunt C."/>
            <person name="Moore K."/>
            <person name="Hurst S.M."/>
            <person name="Lucas M."/>
            <person name="Rochet M."/>
            <person name="Gaillardin C."/>
            <person name="Tallada V.A."/>
            <person name="Garzon A."/>
            <person name="Thode G."/>
            <person name="Daga R.R."/>
            <person name="Cruzado L."/>
            <person name="Jimenez J."/>
            <person name="Sanchez M."/>
            <person name="del Rey F."/>
            <person name="Benito J."/>
            <person name="Dominguez A."/>
            <person name="Revuelta J.L."/>
            <person name="Moreno S."/>
            <person name="Armstrong J."/>
            <person name="Forsburg S.L."/>
            <person name="Cerutti L."/>
            <person name="Lowe T."/>
            <person name="McCombie W.R."/>
            <person name="Paulsen I."/>
            <person name="Potashkin J."/>
            <person name="Shpakovski G.V."/>
            <person name="Ussery D."/>
            <person name="Barrell B.G."/>
            <person name="Nurse P."/>
        </authorList>
    </citation>
    <scope>NUCLEOTIDE SEQUENCE [LARGE SCALE GENOMIC DNA]</scope>
    <source>
        <strain>972 / ATCC 24843</strain>
    </source>
</reference>
<reference key="2">
    <citation type="journal article" date="2006" name="Nat. Biotechnol.">
        <title>ORFeome cloning and global analysis of protein localization in the fission yeast Schizosaccharomyces pombe.</title>
        <authorList>
            <person name="Matsuyama A."/>
            <person name="Arai R."/>
            <person name="Yashiroda Y."/>
            <person name="Shirai A."/>
            <person name="Kamata A."/>
            <person name="Sekido S."/>
            <person name="Kobayashi Y."/>
            <person name="Hashimoto A."/>
            <person name="Hamamoto M."/>
            <person name="Hiraoka Y."/>
            <person name="Horinouchi S."/>
            <person name="Yoshida M."/>
        </authorList>
    </citation>
    <scope>SUBCELLULAR LOCATION [LARGE SCALE ANALYSIS]</scope>
</reference>
<protein>
    <recommendedName>
        <fullName evidence="4">Peroxisomal ATPase pex1</fullName>
        <ecNumber evidence="1">3.6.4.-</ecNumber>
    </recommendedName>
    <alternativeName>
        <fullName>Peroxin-1</fullName>
    </alternativeName>
    <alternativeName>
        <fullName>Peroxisome biogenesis protein pex1</fullName>
    </alternativeName>
</protein>
<dbReference type="EC" id="3.6.4.-" evidence="1"/>
<dbReference type="EMBL" id="CU329672">
    <property type="protein sequence ID" value="CAA19256.1"/>
    <property type="molecule type" value="Genomic_DNA"/>
</dbReference>
<dbReference type="PIR" id="T41400">
    <property type="entry name" value="T41400"/>
</dbReference>
<dbReference type="RefSeq" id="NP_587770.1">
    <property type="nucleotide sequence ID" value="NM_001022763.2"/>
</dbReference>
<dbReference type="SMR" id="O74941"/>
<dbReference type="BioGRID" id="275970">
    <property type="interactions" value="20"/>
</dbReference>
<dbReference type="FunCoup" id="O74941">
    <property type="interactions" value="415"/>
</dbReference>
<dbReference type="STRING" id="284812.O74941"/>
<dbReference type="PaxDb" id="4896-SPCC553.03.1"/>
<dbReference type="EnsemblFungi" id="SPCC553.03.1">
    <property type="protein sequence ID" value="SPCC553.03.1:pep"/>
    <property type="gene ID" value="SPCC553.03"/>
</dbReference>
<dbReference type="GeneID" id="2539405"/>
<dbReference type="KEGG" id="spo:2539405"/>
<dbReference type="PomBase" id="SPCC553.03">
    <property type="gene designation" value="pex1"/>
</dbReference>
<dbReference type="VEuPathDB" id="FungiDB:SPCC553.03"/>
<dbReference type="eggNOG" id="KOG0735">
    <property type="taxonomic scope" value="Eukaryota"/>
</dbReference>
<dbReference type="HOGENOM" id="CLU_013900_0_0_1"/>
<dbReference type="InParanoid" id="O74941"/>
<dbReference type="OMA" id="DWELTEM"/>
<dbReference type="PhylomeDB" id="O74941"/>
<dbReference type="PRO" id="PR:O74941"/>
<dbReference type="Proteomes" id="UP000002485">
    <property type="component" value="Chromosome III"/>
</dbReference>
<dbReference type="GO" id="GO:0005737">
    <property type="term" value="C:cytoplasm"/>
    <property type="evidence" value="ECO:0007005"/>
    <property type="project" value="PomBase"/>
</dbReference>
<dbReference type="GO" id="GO:0005829">
    <property type="term" value="C:cytosol"/>
    <property type="evidence" value="ECO:0007005"/>
    <property type="project" value="PomBase"/>
</dbReference>
<dbReference type="GO" id="GO:0005778">
    <property type="term" value="C:peroxisomal membrane"/>
    <property type="evidence" value="ECO:0000318"/>
    <property type="project" value="GO_Central"/>
</dbReference>
<dbReference type="GO" id="GO:0005524">
    <property type="term" value="F:ATP binding"/>
    <property type="evidence" value="ECO:0000255"/>
    <property type="project" value="PomBase"/>
</dbReference>
<dbReference type="GO" id="GO:0016887">
    <property type="term" value="F:ATP hydrolysis activity"/>
    <property type="evidence" value="ECO:0000318"/>
    <property type="project" value="GO_Central"/>
</dbReference>
<dbReference type="GO" id="GO:0016558">
    <property type="term" value="P:protein import into peroxisome matrix"/>
    <property type="evidence" value="ECO:0000318"/>
    <property type="project" value="GO_Central"/>
</dbReference>
<dbReference type="GO" id="GO:0016562">
    <property type="term" value="P:protein import into peroxisome matrix, receptor recycling"/>
    <property type="evidence" value="ECO:0000266"/>
    <property type="project" value="PomBase"/>
</dbReference>
<dbReference type="GO" id="GO:0043335">
    <property type="term" value="P:protein unfolding"/>
    <property type="evidence" value="ECO:0000318"/>
    <property type="project" value="GO_Central"/>
</dbReference>
<dbReference type="CDD" id="cd19526">
    <property type="entry name" value="RecA-like_PEX1_r2"/>
    <property type="match status" value="1"/>
</dbReference>
<dbReference type="FunFam" id="3.40.50.300:FF:000149">
    <property type="entry name" value="Nuclear valosin-containing protein-like"/>
    <property type="match status" value="1"/>
</dbReference>
<dbReference type="FunFam" id="1.10.8.60:FF:000461">
    <property type="entry name" value="Peroxisomal ATPase pex1"/>
    <property type="match status" value="1"/>
</dbReference>
<dbReference type="Gene3D" id="1.10.8.60">
    <property type="match status" value="1"/>
</dbReference>
<dbReference type="Gene3D" id="3.10.330.10">
    <property type="match status" value="1"/>
</dbReference>
<dbReference type="Gene3D" id="3.40.50.300">
    <property type="entry name" value="P-loop containing nucleotide triphosphate hydrolases"/>
    <property type="match status" value="2"/>
</dbReference>
<dbReference type="InterPro" id="IPR003593">
    <property type="entry name" value="AAA+_ATPase"/>
</dbReference>
<dbReference type="InterPro" id="IPR050168">
    <property type="entry name" value="AAA_ATPase_domain"/>
</dbReference>
<dbReference type="InterPro" id="IPR041569">
    <property type="entry name" value="AAA_lid_3"/>
</dbReference>
<dbReference type="InterPro" id="IPR003959">
    <property type="entry name" value="ATPase_AAA_core"/>
</dbReference>
<dbReference type="InterPro" id="IPR029067">
    <property type="entry name" value="CDC48_domain_2-like_sf"/>
</dbReference>
<dbReference type="InterPro" id="IPR027417">
    <property type="entry name" value="P-loop_NTPase"/>
</dbReference>
<dbReference type="InterPro" id="IPR015342">
    <property type="entry name" value="PEX1-N_C-lobe"/>
</dbReference>
<dbReference type="PANTHER" id="PTHR23077">
    <property type="entry name" value="AAA-FAMILY ATPASE"/>
    <property type="match status" value="1"/>
</dbReference>
<dbReference type="PANTHER" id="PTHR23077:SF12">
    <property type="entry name" value="PEROXISOMAL ATPASE PEX1"/>
    <property type="match status" value="1"/>
</dbReference>
<dbReference type="Pfam" id="PF00004">
    <property type="entry name" value="AAA"/>
    <property type="match status" value="2"/>
</dbReference>
<dbReference type="Pfam" id="PF17862">
    <property type="entry name" value="AAA_lid_3"/>
    <property type="match status" value="1"/>
</dbReference>
<dbReference type="Pfam" id="PF09262">
    <property type="entry name" value="PEX-1N"/>
    <property type="match status" value="1"/>
</dbReference>
<dbReference type="SMART" id="SM00382">
    <property type="entry name" value="AAA"/>
    <property type="match status" value="2"/>
</dbReference>
<dbReference type="SUPFAM" id="SSF54585">
    <property type="entry name" value="Cdc48 domain 2-like"/>
    <property type="match status" value="1"/>
</dbReference>
<dbReference type="SUPFAM" id="SSF52540">
    <property type="entry name" value="P-loop containing nucleoside triphosphate hydrolases"/>
    <property type="match status" value="2"/>
</dbReference>
<organism>
    <name type="scientific">Schizosaccharomyces pombe (strain 972 / ATCC 24843)</name>
    <name type="common">Fission yeast</name>
    <dbReference type="NCBI Taxonomy" id="284812"/>
    <lineage>
        <taxon>Eukaryota</taxon>
        <taxon>Fungi</taxon>
        <taxon>Dikarya</taxon>
        <taxon>Ascomycota</taxon>
        <taxon>Taphrinomycotina</taxon>
        <taxon>Schizosaccharomycetes</taxon>
        <taxon>Schizosaccharomycetales</taxon>
        <taxon>Schizosaccharomycetaceae</taxon>
        <taxon>Schizosaccharomyces</taxon>
    </lineage>
</organism>
<comment type="function">
    <text evidence="1">Component of the pex1-pex6 AAA ATPase complex, a protein dislocase complex that mediates the ATP-dependent extraction of the pex5 receptor from peroxisomal membranes, an essential step for pex5 recycling. Specifically recognizes pex5 monoubiquitinated at 'Cys-6', and pulls it out of the peroxisome lumen through the pex2-pex10-pex12 retrotranslocation channel. Extraction by the pex1-pex6 AAA ATPase complex is accompanied by unfolding of the TPR repeats and release of bound cargo from pex5.</text>
</comment>
<comment type="catalytic activity">
    <reaction evidence="1">
        <text>ATP + H2O = ADP + phosphate + H(+)</text>
        <dbReference type="Rhea" id="RHEA:13065"/>
        <dbReference type="ChEBI" id="CHEBI:15377"/>
        <dbReference type="ChEBI" id="CHEBI:15378"/>
        <dbReference type="ChEBI" id="CHEBI:30616"/>
        <dbReference type="ChEBI" id="CHEBI:43474"/>
        <dbReference type="ChEBI" id="CHEBI:456216"/>
    </reaction>
    <physiologicalReaction direction="left-to-right" evidence="1">
        <dbReference type="Rhea" id="RHEA:13066"/>
    </physiologicalReaction>
</comment>
<comment type="subunit">
    <text evidence="1">Interacts with pex6; forming the pex1-pex6 AAA ATPase complex, which is composed of a heterohexamer formed by a trimer of pex1-pex6 dimers.</text>
</comment>
<comment type="subcellular location">
    <subcellularLocation>
        <location evidence="3">Cytoplasm</location>
        <location evidence="3">Cytosol</location>
    </subcellularLocation>
    <subcellularLocation>
        <location evidence="1">Peroxisome membrane</location>
        <topology evidence="1">Peripheral membrane protein</topology>
        <orientation evidence="1">Cytoplasmic side</orientation>
    </subcellularLocation>
</comment>
<comment type="similarity">
    <text evidence="4">Belongs to the AAA ATPase family.</text>
</comment>
<sequence length="937" mass="105905">MRCIVSYKSLRSCLVNVPELLLESISEPVQNYAVQAVVCKNDIKKTFYFGISGIPSQFSFEIDSTYAHTLKLAENQEINLSIIDCTHEIEQLEIEPVTSNDWEIAERNAAWLEENLLVQYRVATTERFIIYLPSGTFIQFQPLKLIPSSLCGRLLRTTEVLITPKPNTSAIEVKENRKVNLRCVVENRLLPDSVTADSPALCVFLPLNFPDRPDVVYMDGGNLKSTIVCQCVSCPFQIPGHFFISKSLALSYSIKTGFKFQIWKAHNPPSSSKFILEQKGLPPESNLSSELVAAKLKNSYLMDGMTLKLVDIAVSYSVSGLSGVVKNPIQDIKITSDTNVPVNAGIRNNSPRLSMQPFPHEFAQVRNAVFLHQNIYINGPKGCGKSNLVHSLFDYYSLNSIYFQMIVSCSEIDRSSFAKFQSFWNNVFIQAERYEPSIIYLDDVHCLISSSNENGELGFVEEREIAFLQHQIINLKRKRKIIFIGFGEEFLTFSENLVLPLLFQIKIALPSLAVTRRKEILTTIFQENFSDITMDSIEFISVKTEGYLMTDLVLFVKRLLSEAFVEKIQNGPKHLMNKGLIEKTLKDFVPLQLRKAKFVKSSIRWIDIAGMQEAKEAVRDIIESPVKYSLIYKQCRLRLPTGILLFGYPGCGKTYLASAISSTFPVQFISIKGPELLDKYIGKSEQGVRDLFSRAQMAKPCVLFFDEFDSVAPRRGQDSTGVTDRVVNQILTQMDGAESLDGVYIVAATTRPDMIDPALLRPGRLDKLIFCDLPNEEERLEVLQKLANRFHIENAAMLKKLSTLTDGYTYADLSSLLYDAHLIAVHKLLKRVSINAVDPSQTTSSFTNLTTESKRNASMLALPPESRYNQNMQSMSDSKSVVIEDYMLMEALKKNSPSLNSEEFEHLSNLYRDFRSKLFEPELNARNTDVGSKTRQI</sequence>
<keyword id="KW-0067">ATP-binding</keyword>
<keyword id="KW-0963">Cytoplasm</keyword>
<keyword id="KW-0378">Hydrolase</keyword>
<keyword id="KW-0472">Membrane</keyword>
<keyword id="KW-0547">Nucleotide-binding</keyword>
<keyword id="KW-0576">Peroxisome</keyword>
<keyword id="KW-0962">Peroxisome biogenesis</keyword>
<keyword id="KW-0653">Protein transport</keyword>
<keyword id="KW-1185">Reference proteome</keyword>
<keyword id="KW-0677">Repeat</keyword>
<keyword id="KW-0813">Transport</keyword>